<keyword id="KW-0010">Activator</keyword>
<keyword id="KW-0175">Coiled coil</keyword>
<keyword id="KW-0238">DNA-binding</keyword>
<keyword id="KW-0539">Nucleus</keyword>
<keyword id="KW-1185">Reference proteome</keyword>
<keyword id="KW-0804">Transcription</keyword>
<keyword id="KW-0805">Transcription regulation</keyword>
<name>TGA1A_TOBAC</name>
<protein>
    <recommendedName>
        <fullName>TGACG-sequence-specific DNA-binding protein TGA-1A</fullName>
        <shortName>ASF-1 protein</shortName>
        <shortName>TGA1a</shortName>
    </recommendedName>
</protein>
<feature type="chain" id="PRO_0000076546" description="TGACG-sequence-specific DNA-binding protein TGA-1A">
    <location>
        <begin position="1"/>
        <end position="359"/>
    </location>
</feature>
<feature type="domain" description="bZIP" evidence="2">
    <location>
        <begin position="72"/>
        <end position="135"/>
    </location>
</feature>
<feature type="domain" description="DOG1" evidence="3">
    <location>
        <begin position="143"/>
        <end position="354"/>
    </location>
</feature>
<feature type="region of interest" description="Disordered" evidence="4">
    <location>
        <begin position="44"/>
        <end position="72"/>
    </location>
</feature>
<feature type="region of interest" description="Basic motif" evidence="2">
    <location>
        <begin position="74"/>
        <end position="94"/>
    </location>
</feature>
<feature type="region of interest" description="Leucine-zipper" evidence="2">
    <location>
        <begin position="100"/>
        <end position="114"/>
    </location>
</feature>
<feature type="coiled-coil region" evidence="1">
    <location>
        <begin position="73"/>
        <end position="125"/>
    </location>
</feature>
<feature type="compositionally biased region" description="Basic and acidic residues" evidence="4">
    <location>
        <begin position="44"/>
        <end position="54"/>
    </location>
</feature>
<gene>
    <name type="primary">TGA1A</name>
    <name type="synonym">TGA1</name>
</gene>
<dbReference type="EMBL" id="X16449">
    <property type="protein sequence ID" value="CAA34468.1"/>
    <property type="molecule type" value="mRNA"/>
</dbReference>
<dbReference type="PIR" id="S05452">
    <property type="entry name" value="S05452"/>
</dbReference>
<dbReference type="SMR" id="P14232"/>
<dbReference type="IntAct" id="P14232">
    <property type="interactions" value="1"/>
</dbReference>
<dbReference type="STRING" id="4097.P14232"/>
<dbReference type="PaxDb" id="4097-P14232"/>
<dbReference type="Proteomes" id="UP000084051">
    <property type="component" value="Unplaced"/>
</dbReference>
<dbReference type="GO" id="GO:0005634">
    <property type="term" value="C:nucleus"/>
    <property type="evidence" value="ECO:0007669"/>
    <property type="project" value="UniProtKB-SubCell"/>
</dbReference>
<dbReference type="GO" id="GO:0003700">
    <property type="term" value="F:DNA-binding transcription factor activity"/>
    <property type="evidence" value="ECO:0007669"/>
    <property type="project" value="InterPro"/>
</dbReference>
<dbReference type="GO" id="GO:0043565">
    <property type="term" value="F:sequence-specific DNA binding"/>
    <property type="evidence" value="ECO:0007669"/>
    <property type="project" value="InterPro"/>
</dbReference>
<dbReference type="GO" id="GO:0006351">
    <property type="term" value="P:DNA-templated transcription"/>
    <property type="evidence" value="ECO:0007669"/>
    <property type="project" value="InterPro"/>
</dbReference>
<dbReference type="FunFam" id="1.20.5.170:FF:000019">
    <property type="entry name" value="BZIP family transcription factor"/>
    <property type="match status" value="1"/>
</dbReference>
<dbReference type="Gene3D" id="1.20.5.170">
    <property type="match status" value="1"/>
</dbReference>
<dbReference type="InterPro" id="IPR004827">
    <property type="entry name" value="bZIP"/>
</dbReference>
<dbReference type="InterPro" id="IPR046347">
    <property type="entry name" value="bZIP_sf"/>
</dbReference>
<dbReference type="InterPro" id="IPR025422">
    <property type="entry name" value="TGA_domain"/>
</dbReference>
<dbReference type="PANTHER" id="PTHR45693:SF36">
    <property type="entry name" value="TRANSCRIPTION FACTOR TGA4"/>
    <property type="match status" value="1"/>
</dbReference>
<dbReference type="PANTHER" id="PTHR45693">
    <property type="entry name" value="TRANSCRIPTION FACTOR TGA9"/>
    <property type="match status" value="1"/>
</dbReference>
<dbReference type="Pfam" id="PF00170">
    <property type="entry name" value="bZIP_1"/>
    <property type="match status" value="1"/>
</dbReference>
<dbReference type="Pfam" id="PF14144">
    <property type="entry name" value="DOG1"/>
    <property type="match status" value="1"/>
</dbReference>
<dbReference type="SMART" id="SM00338">
    <property type="entry name" value="BRLZ"/>
    <property type="match status" value="1"/>
</dbReference>
<dbReference type="SUPFAM" id="SSF57959">
    <property type="entry name" value="Leucine zipper domain"/>
    <property type="match status" value="1"/>
</dbReference>
<dbReference type="PROSITE" id="PS50217">
    <property type="entry name" value="BZIP"/>
    <property type="match status" value="1"/>
</dbReference>
<dbReference type="PROSITE" id="PS00036">
    <property type="entry name" value="BZIP_BASIC"/>
    <property type="match status" value="1"/>
</dbReference>
<dbReference type="PROSITE" id="PS51806">
    <property type="entry name" value="DOG1"/>
    <property type="match status" value="1"/>
</dbReference>
<accession>P14232</accession>
<organism>
    <name type="scientific">Nicotiana tabacum</name>
    <name type="common">Common tobacco</name>
    <dbReference type="NCBI Taxonomy" id="4097"/>
    <lineage>
        <taxon>Eukaryota</taxon>
        <taxon>Viridiplantae</taxon>
        <taxon>Streptophyta</taxon>
        <taxon>Embryophyta</taxon>
        <taxon>Tracheophyta</taxon>
        <taxon>Spermatophyta</taxon>
        <taxon>Magnoliopsida</taxon>
        <taxon>eudicotyledons</taxon>
        <taxon>Gunneridae</taxon>
        <taxon>Pentapetalae</taxon>
        <taxon>asterids</taxon>
        <taxon>lamiids</taxon>
        <taxon>Solanales</taxon>
        <taxon>Solanaceae</taxon>
        <taxon>Nicotianoideae</taxon>
        <taxon>Nicotianeae</taxon>
        <taxon>Nicotiana</taxon>
    </lineage>
</organism>
<reference key="1">
    <citation type="journal article" date="1989" name="Nature">
        <title>Two tobacco DNA-binding proteins with homology to the nuclear factor CREB.</title>
        <authorList>
            <person name="Katagiri F."/>
            <person name="Lam E."/>
            <person name="Chua N.H."/>
        </authorList>
    </citation>
    <scope>NUCLEOTIDE SEQUENCE [MRNA]</scope>
</reference>
<reference key="2">
    <citation type="journal article" date="1995" name="Nucleic Acids Res.">
        <title>Binding site requirements and differential representation of TGF factors in nuclear ASF-1 activity.</title>
        <authorList>
            <person name="Lam E."/>
            <person name="Lam Y.K."/>
        </authorList>
    </citation>
    <scope>DNA-BINDING</scope>
</reference>
<comment type="function">
    <text>Transcriptional activator that binds specifically to the DNA sequence 5'-TGACG-3'. Recognizes ocs elements like the as-1 motif of the cauliflower mosaic virus 35S promoter. Binding to the as-1-like cis elements mediate auxin- and salicylic acid-inducible transcription. Could also bind to the Hex-motif (5'-TGACGTGG-3') another cis-acting element found in plant histone promoters.</text>
</comment>
<comment type="subunit">
    <text>Binds DNA as a dimer.</text>
</comment>
<comment type="subcellular location">
    <subcellularLocation>
        <location>Nucleus</location>
    </subcellularLocation>
</comment>
<comment type="similarity">
    <text evidence="5">Belongs to the bZIP family.</text>
</comment>
<evidence type="ECO:0000255" key="1"/>
<evidence type="ECO:0000255" key="2">
    <source>
        <dbReference type="PROSITE-ProRule" id="PRU00978"/>
    </source>
</evidence>
<evidence type="ECO:0000255" key="3">
    <source>
        <dbReference type="PROSITE-ProRule" id="PRU01147"/>
    </source>
</evidence>
<evidence type="ECO:0000256" key="4">
    <source>
        <dbReference type="SAM" id="MobiDB-lite"/>
    </source>
</evidence>
<evidence type="ECO:0000305" key="5"/>
<sequence length="359" mass="40701">MGICDPIHQLGMWDDFNSSFPSTSATMILEVDKCLEDQIPIMEKRLDNETEDTSHGTVGTSNRYEPETSKPVEKVLRRLAQNREAARKSRLRKKAYVQQLENSKLKLIQLEQELERARKQGMCVGGGVDASQLSYSGTASSGTAVFDMEYGHWVEEQTRQTNDLRIALHSQIGEAELRIIVDGYLNHYFDLFRMKATAAKADVLYIMSGMWKTSAERFFMWIGGFRPSELLKVLTPHLELLTEQQLREVCNLTQSCQQAEDALSQGMVKLHQILAEAVAAGRLGEGNYTLPQMGPAIEKLEDLVRFVNQADHLRQETLQQMSRILNTCQAAQGLLALGEYFERLRVLSSQWATRLREPT</sequence>
<proteinExistence type="evidence at protein level"/>